<sequence>MRASQFLFATLKETPSDADIVSSQLMLRAGLIRKLASGLYVWLPMGLKVLQKVEKIVREEMQNIGGQEVLMPMTQPAELWQESGRFEDYGPELLRFTDRHNRDFVLGPTHEEVITDLARGELRSYKQLPVTFFQIQGKFRDEIRPRFGIMRAREFTMKDAYSFHVDQASLEVTYQQMYDAYTRIFQRLGLNFRAVLADTGSIGGSASHEFHVLAGSGEDAIAFSDGSDYAANVELAEAICTDERAAPTQDKQNVSTPKIQTNEELAKFLDIPLHTTVKTLVVKGHRINEDGSEGDEQLVALVVRGDHTLNEIKAEKIAEVATPLTFATEEEMKAAGLKKGFIGVDLDMPVYVDRAAAALSDFVSGANEYDMHTTGMNWERDATITDVVDIRNVVEGDASPDGKGTLSIKRGIEVGHIFQLGDKYSKALNCTVMGEDGKPVTLMMGCYGIGVSRIIAAAIEQNHDDNGIIWAKTPDIKDSIAPFDIAIVPMKSKEDTVMQTAEALYEELKARGLNVILDDRNERPGVKFADLELIGIPHRIVVSDRNLAEDKYEYVDRRDGEKQLLSREELLAKVSL</sequence>
<dbReference type="EC" id="6.1.1.15" evidence="1"/>
<dbReference type="EMBL" id="CP000713">
    <property type="protein sequence ID" value="ABQ93703.1"/>
    <property type="molecule type" value="Genomic_DNA"/>
</dbReference>
<dbReference type="SMR" id="A5WDG2"/>
<dbReference type="STRING" id="349106.PsycPRwf_0751"/>
<dbReference type="KEGG" id="prw:PsycPRwf_0751"/>
<dbReference type="eggNOG" id="COG0442">
    <property type="taxonomic scope" value="Bacteria"/>
</dbReference>
<dbReference type="HOGENOM" id="CLU_016739_0_0_6"/>
<dbReference type="GO" id="GO:0005829">
    <property type="term" value="C:cytosol"/>
    <property type="evidence" value="ECO:0007669"/>
    <property type="project" value="TreeGrafter"/>
</dbReference>
<dbReference type="GO" id="GO:0002161">
    <property type="term" value="F:aminoacyl-tRNA deacylase activity"/>
    <property type="evidence" value="ECO:0007669"/>
    <property type="project" value="InterPro"/>
</dbReference>
<dbReference type="GO" id="GO:0005524">
    <property type="term" value="F:ATP binding"/>
    <property type="evidence" value="ECO:0007669"/>
    <property type="project" value="UniProtKB-UniRule"/>
</dbReference>
<dbReference type="GO" id="GO:0004827">
    <property type="term" value="F:proline-tRNA ligase activity"/>
    <property type="evidence" value="ECO:0007669"/>
    <property type="project" value="UniProtKB-UniRule"/>
</dbReference>
<dbReference type="GO" id="GO:0006433">
    <property type="term" value="P:prolyl-tRNA aminoacylation"/>
    <property type="evidence" value="ECO:0007669"/>
    <property type="project" value="UniProtKB-UniRule"/>
</dbReference>
<dbReference type="CDD" id="cd04334">
    <property type="entry name" value="ProRS-INS"/>
    <property type="match status" value="1"/>
</dbReference>
<dbReference type="CDD" id="cd00861">
    <property type="entry name" value="ProRS_anticodon_short"/>
    <property type="match status" value="1"/>
</dbReference>
<dbReference type="CDD" id="cd00779">
    <property type="entry name" value="ProRS_core_prok"/>
    <property type="match status" value="1"/>
</dbReference>
<dbReference type="FunFam" id="3.30.930.10:FF:000043">
    <property type="entry name" value="Proline--tRNA ligase"/>
    <property type="match status" value="1"/>
</dbReference>
<dbReference type="FunFam" id="3.30.930.10:FF:000097">
    <property type="entry name" value="Proline--tRNA ligase"/>
    <property type="match status" value="1"/>
</dbReference>
<dbReference type="Gene3D" id="3.40.50.800">
    <property type="entry name" value="Anticodon-binding domain"/>
    <property type="match status" value="1"/>
</dbReference>
<dbReference type="Gene3D" id="3.30.930.10">
    <property type="entry name" value="Bira Bifunctional Protein, Domain 2"/>
    <property type="match status" value="2"/>
</dbReference>
<dbReference type="HAMAP" id="MF_01569">
    <property type="entry name" value="Pro_tRNA_synth_type1"/>
    <property type="match status" value="1"/>
</dbReference>
<dbReference type="InterPro" id="IPR002314">
    <property type="entry name" value="aa-tRNA-synt_IIb"/>
</dbReference>
<dbReference type="InterPro" id="IPR006195">
    <property type="entry name" value="aa-tRNA-synth_II"/>
</dbReference>
<dbReference type="InterPro" id="IPR045864">
    <property type="entry name" value="aa-tRNA-synth_II/BPL/LPL"/>
</dbReference>
<dbReference type="InterPro" id="IPR004154">
    <property type="entry name" value="Anticodon-bd"/>
</dbReference>
<dbReference type="InterPro" id="IPR036621">
    <property type="entry name" value="Anticodon-bd_dom_sf"/>
</dbReference>
<dbReference type="InterPro" id="IPR002316">
    <property type="entry name" value="Pro-tRNA-ligase_IIa"/>
</dbReference>
<dbReference type="InterPro" id="IPR004500">
    <property type="entry name" value="Pro-tRNA-synth_IIa_bac-type"/>
</dbReference>
<dbReference type="InterPro" id="IPR023717">
    <property type="entry name" value="Pro-tRNA-Synthase_IIa_type1"/>
</dbReference>
<dbReference type="InterPro" id="IPR050062">
    <property type="entry name" value="Pro-tRNA_synthetase"/>
</dbReference>
<dbReference type="InterPro" id="IPR044140">
    <property type="entry name" value="ProRS_anticodon_short"/>
</dbReference>
<dbReference type="InterPro" id="IPR033730">
    <property type="entry name" value="ProRS_core_prok"/>
</dbReference>
<dbReference type="InterPro" id="IPR036754">
    <property type="entry name" value="YbaK/aa-tRNA-synt-asso_dom_sf"/>
</dbReference>
<dbReference type="InterPro" id="IPR007214">
    <property type="entry name" value="YbaK/aa-tRNA-synth-assoc-dom"/>
</dbReference>
<dbReference type="NCBIfam" id="NF006625">
    <property type="entry name" value="PRK09194.1"/>
    <property type="match status" value="1"/>
</dbReference>
<dbReference type="NCBIfam" id="TIGR00409">
    <property type="entry name" value="proS_fam_II"/>
    <property type="match status" value="1"/>
</dbReference>
<dbReference type="PANTHER" id="PTHR42753">
    <property type="entry name" value="MITOCHONDRIAL RIBOSOME PROTEIN L39/PROLYL-TRNA LIGASE FAMILY MEMBER"/>
    <property type="match status" value="1"/>
</dbReference>
<dbReference type="PANTHER" id="PTHR42753:SF2">
    <property type="entry name" value="PROLINE--TRNA LIGASE"/>
    <property type="match status" value="1"/>
</dbReference>
<dbReference type="Pfam" id="PF03129">
    <property type="entry name" value="HGTP_anticodon"/>
    <property type="match status" value="1"/>
</dbReference>
<dbReference type="Pfam" id="PF00587">
    <property type="entry name" value="tRNA-synt_2b"/>
    <property type="match status" value="1"/>
</dbReference>
<dbReference type="Pfam" id="PF04073">
    <property type="entry name" value="tRNA_edit"/>
    <property type="match status" value="1"/>
</dbReference>
<dbReference type="PIRSF" id="PIRSF001535">
    <property type="entry name" value="ProRS_1"/>
    <property type="match status" value="1"/>
</dbReference>
<dbReference type="PRINTS" id="PR01046">
    <property type="entry name" value="TRNASYNTHPRO"/>
</dbReference>
<dbReference type="SUPFAM" id="SSF52954">
    <property type="entry name" value="Class II aaRS ABD-related"/>
    <property type="match status" value="1"/>
</dbReference>
<dbReference type="SUPFAM" id="SSF55681">
    <property type="entry name" value="Class II aaRS and biotin synthetases"/>
    <property type="match status" value="1"/>
</dbReference>
<dbReference type="SUPFAM" id="SSF55826">
    <property type="entry name" value="YbaK/ProRS associated domain"/>
    <property type="match status" value="1"/>
</dbReference>
<dbReference type="PROSITE" id="PS50862">
    <property type="entry name" value="AA_TRNA_LIGASE_II"/>
    <property type="match status" value="1"/>
</dbReference>
<gene>
    <name evidence="1" type="primary">proS</name>
    <name type="ordered locus">PsycPRwf_0751</name>
</gene>
<protein>
    <recommendedName>
        <fullName evidence="1">Proline--tRNA ligase</fullName>
        <ecNumber evidence="1">6.1.1.15</ecNumber>
    </recommendedName>
    <alternativeName>
        <fullName evidence="1">Prolyl-tRNA synthetase</fullName>
        <shortName evidence="1">ProRS</shortName>
    </alternativeName>
</protein>
<proteinExistence type="inferred from homology"/>
<keyword id="KW-0030">Aminoacyl-tRNA synthetase</keyword>
<keyword id="KW-0067">ATP-binding</keyword>
<keyword id="KW-0963">Cytoplasm</keyword>
<keyword id="KW-0436">Ligase</keyword>
<keyword id="KW-0547">Nucleotide-binding</keyword>
<keyword id="KW-0648">Protein biosynthesis</keyword>
<organism>
    <name type="scientific">Psychrobacter sp. (strain PRwf-1)</name>
    <dbReference type="NCBI Taxonomy" id="349106"/>
    <lineage>
        <taxon>Bacteria</taxon>
        <taxon>Pseudomonadati</taxon>
        <taxon>Pseudomonadota</taxon>
        <taxon>Gammaproteobacteria</taxon>
        <taxon>Moraxellales</taxon>
        <taxon>Moraxellaceae</taxon>
        <taxon>Psychrobacter</taxon>
    </lineage>
</organism>
<comment type="function">
    <text evidence="1">Catalyzes the attachment of proline to tRNA(Pro) in a two-step reaction: proline is first activated by ATP to form Pro-AMP and then transferred to the acceptor end of tRNA(Pro). As ProRS can inadvertently accommodate and process non-cognate amino acids such as alanine and cysteine, to avoid such errors it has two additional distinct editing activities against alanine. One activity is designated as 'pretransfer' editing and involves the tRNA(Pro)-independent hydrolysis of activated Ala-AMP. The other activity is designated 'posttransfer' editing and involves deacylation of mischarged Ala-tRNA(Pro). The misacylated Cys-tRNA(Pro) is not edited by ProRS.</text>
</comment>
<comment type="catalytic activity">
    <reaction evidence="1">
        <text>tRNA(Pro) + L-proline + ATP = L-prolyl-tRNA(Pro) + AMP + diphosphate</text>
        <dbReference type="Rhea" id="RHEA:14305"/>
        <dbReference type="Rhea" id="RHEA-COMP:9700"/>
        <dbReference type="Rhea" id="RHEA-COMP:9702"/>
        <dbReference type="ChEBI" id="CHEBI:30616"/>
        <dbReference type="ChEBI" id="CHEBI:33019"/>
        <dbReference type="ChEBI" id="CHEBI:60039"/>
        <dbReference type="ChEBI" id="CHEBI:78442"/>
        <dbReference type="ChEBI" id="CHEBI:78532"/>
        <dbReference type="ChEBI" id="CHEBI:456215"/>
        <dbReference type="EC" id="6.1.1.15"/>
    </reaction>
</comment>
<comment type="subunit">
    <text evidence="1">Homodimer.</text>
</comment>
<comment type="subcellular location">
    <subcellularLocation>
        <location evidence="1">Cytoplasm</location>
    </subcellularLocation>
</comment>
<comment type="domain">
    <text evidence="1">Consists of three domains: the N-terminal catalytic domain, the editing domain and the C-terminal anticodon-binding domain.</text>
</comment>
<comment type="similarity">
    <text evidence="1">Belongs to the class-II aminoacyl-tRNA synthetase family. ProS type 1 subfamily.</text>
</comment>
<feature type="chain" id="PRO_1000073591" description="Proline--tRNA ligase">
    <location>
        <begin position="1"/>
        <end position="576"/>
    </location>
</feature>
<accession>A5WDG2</accession>
<reference key="1">
    <citation type="submission" date="2007-05" db="EMBL/GenBank/DDBJ databases">
        <title>Complete sequence of chromosome of Psychrobacter sp. PRwf-1.</title>
        <authorList>
            <consortium name="US DOE Joint Genome Institute"/>
            <person name="Copeland A."/>
            <person name="Lucas S."/>
            <person name="Lapidus A."/>
            <person name="Barry K."/>
            <person name="Detter J.C."/>
            <person name="Glavina del Rio T."/>
            <person name="Hammon N."/>
            <person name="Israni S."/>
            <person name="Dalin E."/>
            <person name="Tice H."/>
            <person name="Pitluck S."/>
            <person name="Chain P."/>
            <person name="Malfatti S."/>
            <person name="Shin M."/>
            <person name="Vergez L."/>
            <person name="Schmutz J."/>
            <person name="Larimer F."/>
            <person name="Land M."/>
            <person name="Hauser L."/>
            <person name="Kyrpides N."/>
            <person name="Kim E."/>
            <person name="Tiedje J."/>
            <person name="Richardson P."/>
        </authorList>
    </citation>
    <scope>NUCLEOTIDE SEQUENCE [LARGE SCALE GENOMIC DNA]</scope>
    <source>
        <strain>PRwf-1</strain>
    </source>
</reference>
<evidence type="ECO:0000255" key="1">
    <source>
        <dbReference type="HAMAP-Rule" id="MF_01569"/>
    </source>
</evidence>
<name>SYP_PSYWF</name>